<feature type="chain" id="PRO_0000246098" description="Probable Fe(2+)-trafficking protein">
    <location>
        <begin position="1"/>
        <end position="90"/>
    </location>
</feature>
<dbReference type="EMBL" id="CP000083">
    <property type="protein sequence ID" value="AAZ24624.1"/>
    <property type="molecule type" value="Genomic_DNA"/>
</dbReference>
<dbReference type="RefSeq" id="WP_011044884.1">
    <property type="nucleotide sequence ID" value="NC_003910.7"/>
</dbReference>
<dbReference type="SMR" id="Q47WL9"/>
<dbReference type="STRING" id="167879.CPS_4149"/>
<dbReference type="KEGG" id="cps:CPS_4149"/>
<dbReference type="eggNOG" id="COG2924">
    <property type="taxonomic scope" value="Bacteria"/>
</dbReference>
<dbReference type="HOGENOM" id="CLU_170994_0_0_6"/>
<dbReference type="Proteomes" id="UP000000547">
    <property type="component" value="Chromosome"/>
</dbReference>
<dbReference type="GO" id="GO:0005829">
    <property type="term" value="C:cytosol"/>
    <property type="evidence" value="ECO:0007669"/>
    <property type="project" value="TreeGrafter"/>
</dbReference>
<dbReference type="GO" id="GO:0005506">
    <property type="term" value="F:iron ion binding"/>
    <property type="evidence" value="ECO:0007669"/>
    <property type="project" value="UniProtKB-UniRule"/>
</dbReference>
<dbReference type="GO" id="GO:0034599">
    <property type="term" value="P:cellular response to oxidative stress"/>
    <property type="evidence" value="ECO:0007669"/>
    <property type="project" value="TreeGrafter"/>
</dbReference>
<dbReference type="FunFam" id="1.10.3880.10:FF:000001">
    <property type="entry name" value="Probable Fe(2+)-trafficking protein"/>
    <property type="match status" value="1"/>
</dbReference>
<dbReference type="Gene3D" id="1.10.3880.10">
    <property type="entry name" value="Fe(II) trafficking protein YggX"/>
    <property type="match status" value="1"/>
</dbReference>
<dbReference type="HAMAP" id="MF_00686">
    <property type="entry name" value="Fe_traffic_YggX"/>
    <property type="match status" value="1"/>
</dbReference>
<dbReference type="InterPro" id="IPR007457">
    <property type="entry name" value="Fe_traffick_prot_YggX"/>
</dbReference>
<dbReference type="InterPro" id="IPR036766">
    <property type="entry name" value="Fe_traffick_prot_YggX_sf"/>
</dbReference>
<dbReference type="NCBIfam" id="NF003817">
    <property type="entry name" value="PRK05408.1"/>
    <property type="match status" value="1"/>
</dbReference>
<dbReference type="PANTHER" id="PTHR36965">
    <property type="entry name" value="FE(2+)-TRAFFICKING PROTEIN-RELATED"/>
    <property type="match status" value="1"/>
</dbReference>
<dbReference type="PANTHER" id="PTHR36965:SF1">
    <property type="entry name" value="FE(2+)-TRAFFICKING PROTEIN-RELATED"/>
    <property type="match status" value="1"/>
</dbReference>
<dbReference type="Pfam" id="PF04362">
    <property type="entry name" value="Iron_traffic"/>
    <property type="match status" value="1"/>
</dbReference>
<dbReference type="PIRSF" id="PIRSF029827">
    <property type="entry name" value="Fe_traffic_YggX"/>
    <property type="match status" value="1"/>
</dbReference>
<dbReference type="SUPFAM" id="SSF111148">
    <property type="entry name" value="YggX-like"/>
    <property type="match status" value="1"/>
</dbReference>
<comment type="function">
    <text evidence="1">Could be a mediator in iron transactions between iron acquisition and iron-requiring processes, such as synthesis and/or repair of Fe-S clusters in biosynthetic enzymes.</text>
</comment>
<comment type="similarity">
    <text evidence="1">Belongs to the Fe(2+)-trafficking protein family.</text>
</comment>
<accession>Q47WL9</accession>
<sequence>MSRTVFCQNLNKEAEGLGFQLYPGEIGKRIFDNISKEAWTIWQKKQTMLINEKKMNMMNVDDRAFLEAAMVAYLFEGKEPEIEGYVPPSK</sequence>
<name>FETP_COLP3</name>
<gene>
    <name type="ordered locus">CPS_4149</name>
</gene>
<proteinExistence type="inferred from homology"/>
<protein>
    <recommendedName>
        <fullName evidence="1">Probable Fe(2+)-trafficking protein</fullName>
    </recommendedName>
</protein>
<organism>
    <name type="scientific">Colwellia psychrerythraea (strain 34H / ATCC BAA-681)</name>
    <name type="common">Vibrio psychroerythus</name>
    <dbReference type="NCBI Taxonomy" id="167879"/>
    <lineage>
        <taxon>Bacteria</taxon>
        <taxon>Pseudomonadati</taxon>
        <taxon>Pseudomonadota</taxon>
        <taxon>Gammaproteobacteria</taxon>
        <taxon>Alteromonadales</taxon>
        <taxon>Colwelliaceae</taxon>
        <taxon>Colwellia</taxon>
    </lineage>
</organism>
<evidence type="ECO:0000255" key="1">
    <source>
        <dbReference type="HAMAP-Rule" id="MF_00686"/>
    </source>
</evidence>
<reference key="1">
    <citation type="journal article" date="2005" name="Proc. Natl. Acad. Sci. U.S.A.">
        <title>The psychrophilic lifestyle as revealed by the genome sequence of Colwellia psychrerythraea 34H through genomic and proteomic analyses.</title>
        <authorList>
            <person name="Methe B.A."/>
            <person name="Nelson K.E."/>
            <person name="Deming J.W."/>
            <person name="Momen B."/>
            <person name="Melamud E."/>
            <person name="Zhang X."/>
            <person name="Moult J."/>
            <person name="Madupu R."/>
            <person name="Nelson W.C."/>
            <person name="Dodson R.J."/>
            <person name="Brinkac L.M."/>
            <person name="Daugherty S.C."/>
            <person name="Durkin A.S."/>
            <person name="DeBoy R.T."/>
            <person name="Kolonay J.F."/>
            <person name="Sullivan S.A."/>
            <person name="Zhou L."/>
            <person name="Davidsen T.M."/>
            <person name="Wu M."/>
            <person name="Huston A.L."/>
            <person name="Lewis M."/>
            <person name="Weaver B."/>
            <person name="Weidman J.F."/>
            <person name="Khouri H."/>
            <person name="Utterback T.R."/>
            <person name="Feldblyum T.V."/>
            <person name="Fraser C.M."/>
        </authorList>
    </citation>
    <scope>NUCLEOTIDE SEQUENCE [LARGE SCALE GENOMIC DNA]</scope>
    <source>
        <strain>34H / ATCC BAA-681</strain>
    </source>
</reference>
<keyword id="KW-0408">Iron</keyword>